<comment type="function">
    <text evidence="1">RuBisCO catalyzes two reactions: the carboxylation of D-ribulose 1,5-bisphosphate, the primary event in carbon dioxide fixation, as well as the oxidative fragmentation of the pentose substrate in the photorespiration process. Both reactions occur simultaneously and in competition at the same active site.</text>
</comment>
<comment type="catalytic activity">
    <reaction evidence="1">
        <text>2 (2R)-3-phosphoglycerate + 2 H(+) = D-ribulose 1,5-bisphosphate + CO2 + H2O</text>
        <dbReference type="Rhea" id="RHEA:23124"/>
        <dbReference type="ChEBI" id="CHEBI:15377"/>
        <dbReference type="ChEBI" id="CHEBI:15378"/>
        <dbReference type="ChEBI" id="CHEBI:16526"/>
        <dbReference type="ChEBI" id="CHEBI:57870"/>
        <dbReference type="ChEBI" id="CHEBI:58272"/>
        <dbReference type="EC" id="4.1.1.39"/>
    </reaction>
</comment>
<comment type="catalytic activity">
    <reaction evidence="1">
        <text>D-ribulose 1,5-bisphosphate + O2 = 2-phosphoglycolate + (2R)-3-phosphoglycerate + 2 H(+)</text>
        <dbReference type="Rhea" id="RHEA:36631"/>
        <dbReference type="ChEBI" id="CHEBI:15378"/>
        <dbReference type="ChEBI" id="CHEBI:15379"/>
        <dbReference type="ChEBI" id="CHEBI:57870"/>
        <dbReference type="ChEBI" id="CHEBI:58033"/>
        <dbReference type="ChEBI" id="CHEBI:58272"/>
    </reaction>
</comment>
<comment type="cofactor">
    <cofactor evidence="1">
        <name>Mg(2+)</name>
        <dbReference type="ChEBI" id="CHEBI:18420"/>
    </cofactor>
    <text evidence="1">Binds 1 Mg(2+) ion per subunit.</text>
</comment>
<comment type="subunit">
    <text evidence="1">Heterohexadecamer of 8 large chains and 8 small chains; disulfide-linked. The disulfide link is formed within the large subunit homodimers.</text>
</comment>
<comment type="subcellular location">
    <subcellularLocation>
        <location>Plastid</location>
        <location>Chloroplast</location>
    </subcellularLocation>
</comment>
<comment type="PTM">
    <text evidence="1">The disulfide bond which can form in the large chain dimeric partners within the hexadecamer appears to be associated with oxidative stress and protein turnover.</text>
</comment>
<comment type="miscellaneous">
    <text evidence="1">The basic functional RuBisCO is composed of a large chain homodimer in a 'head-to-tail' conformation. In form I RuBisCO this homodimer is arranged in a barrel-like tetramer with the small subunits forming a tetrameric 'cap' on each end of the 'barrel'.</text>
</comment>
<comment type="similarity">
    <text evidence="1">Belongs to the RuBisCO large chain family. Type I subfamily.</text>
</comment>
<dbReference type="EC" id="4.1.1.39" evidence="1"/>
<dbReference type="EMBL" id="Z70159">
    <property type="protein sequence ID" value="CAA94017.1"/>
    <property type="molecule type" value="Genomic_DNA"/>
</dbReference>
<dbReference type="SMR" id="P93988"/>
<dbReference type="GO" id="GO:0009507">
    <property type="term" value="C:chloroplast"/>
    <property type="evidence" value="ECO:0007669"/>
    <property type="project" value="UniProtKB-SubCell"/>
</dbReference>
<dbReference type="GO" id="GO:0000287">
    <property type="term" value="F:magnesium ion binding"/>
    <property type="evidence" value="ECO:0007669"/>
    <property type="project" value="InterPro"/>
</dbReference>
<dbReference type="GO" id="GO:0004497">
    <property type="term" value="F:monooxygenase activity"/>
    <property type="evidence" value="ECO:0007669"/>
    <property type="project" value="UniProtKB-KW"/>
</dbReference>
<dbReference type="GO" id="GO:0016984">
    <property type="term" value="F:ribulose-bisphosphate carboxylase activity"/>
    <property type="evidence" value="ECO:0007669"/>
    <property type="project" value="UniProtKB-EC"/>
</dbReference>
<dbReference type="GO" id="GO:0009853">
    <property type="term" value="P:photorespiration"/>
    <property type="evidence" value="ECO:0007669"/>
    <property type="project" value="UniProtKB-KW"/>
</dbReference>
<dbReference type="GO" id="GO:0019253">
    <property type="term" value="P:reductive pentose-phosphate cycle"/>
    <property type="evidence" value="ECO:0007669"/>
    <property type="project" value="UniProtKB-KW"/>
</dbReference>
<dbReference type="CDD" id="cd08212">
    <property type="entry name" value="RuBisCO_large_I"/>
    <property type="match status" value="1"/>
</dbReference>
<dbReference type="FunFam" id="3.20.20.110:FF:000001">
    <property type="entry name" value="Ribulose bisphosphate carboxylase large chain"/>
    <property type="match status" value="1"/>
</dbReference>
<dbReference type="FunFam" id="3.30.70.150:FF:000001">
    <property type="entry name" value="Ribulose bisphosphate carboxylase large chain"/>
    <property type="match status" value="1"/>
</dbReference>
<dbReference type="Gene3D" id="3.20.20.110">
    <property type="entry name" value="Ribulose bisphosphate carboxylase, large subunit, C-terminal domain"/>
    <property type="match status" value="1"/>
</dbReference>
<dbReference type="Gene3D" id="3.30.70.150">
    <property type="entry name" value="RuBisCO large subunit, N-terminal domain"/>
    <property type="match status" value="1"/>
</dbReference>
<dbReference type="HAMAP" id="MF_01338">
    <property type="entry name" value="RuBisCO_L_type1"/>
    <property type="match status" value="1"/>
</dbReference>
<dbReference type="InterPro" id="IPR033966">
    <property type="entry name" value="RuBisCO"/>
</dbReference>
<dbReference type="InterPro" id="IPR020878">
    <property type="entry name" value="RuBisCo_large_chain_AS"/>
</dbReference>
<dbReference type="InterPro" id="IPR000685">
    <property type="entry name" value="RuBisCO_lsu_C"/>
</dbReference>
<dbReference type="InterPro" id="IPR036376">
    <property type="entry name" value="RuBisCO_lsu_C_sf"/>
</dbReference>
<dbReference type="InterPro" id="IPR017443">
    <property type="entry name" value="RuBisCO_lsu_fd_N"/>
</dbReference>
<dbReference type="InterPro" id="IPR036422">
    <property type="entry name" value="RuBisCO_lsu_N_sf"/>
</dbReference>
<dbReference type="InterPro" id="IPR020888">
    <property type="entry name" value="RuBisCO_lsuI"/>
</dbReference>
<dbReference type="NCBIfam" id="NF003252">
    <property type="entry name" value="PRK04208.1"/>
    <property type="match status" value="1"/>
</dbReference>
<dbReference type="PANTHER" id="PTHR42704">
    <property type="entry name" value="RIBULOSE BISPHOSPHATE CARBOXYLASE"/>
    <property type="match status" value="1"/>
</dbReference>
<dbReference type="PANTHER" id="PTHR42704:SF15">
    <property type="entry name" value="RIBULOSE BISPHOSPHATE CARBOXYLASE LARGE CHAIN"/>
    <property type="match status" value="1"/>
</dbReference>
<dbReference type="Pfam" id="PF00016">
    <property type="entry name" value="RuBisCO_large"/>
    <property type="match status" value="1"/>
</dbReference>
<dbReference type="Pfam" id="PF02788">
    <property type="entry name" value="RuBisCO_large_N"/>
    <property type="match status" value="1"/>
</dbReference>
<dbReference type="SFLD" id="SFLDG01052">
    <property type="entry name" value="RuBisCO"/>
    <property type="match status" value="1"/>
</dbReference>
<dbReference type="SFLD" id="SFLDS00014">
    <property type="entry name" value="RuBisCO"/>
    <property type="match status" value="1"/>
</dbReference>
<dbReference type="SFLD" id="SFLDG00301">
    <property type="entry name" value="RuBisCO-like_proteins"/>
    <property type="match status" value="1"/>
</dbReference>
<dbReference type="SUPFAM" id="SSF51649">
    <property type="entry name" value="RuBisCo, C-terminal domain"/>
    <property type="match status" value="1"/>
</dbReference>
<dbReference type="SUPFAM" id="SSF54966">
    <property type="entry name" value="RuBisCO, large subunit, small (N-terminal) domain"/>
    <property type="match status" value="1"/>
</dbReference>
<dbReference type="PROSITE" id="PS00157">
    <property type="entry name" value="RUBISCO_LARGE"/>
    <property type="match status" value="1"/>
</dbReference>
<name>RBL_BROCO</name>
<sequence>SVGFKAGVKDYKLTYYTPDYETKDTDILAAFRVTPQPGVPPEEAGAEVAAESSTGTWTTVWTDGLTSLDRYKGRCYHIEPVAGEENQYIAYVAYPLDLFEEGSVTNMFTSIVGNVFGFKALRALRLEDLRIPTAYTKTFQGPPHGIQVERDKLNKYGRPLLGCTIKPKLGLSAKNYGRAVYECLRGGLDFTKDDENVNSQPFMRWRDRFLFCAEAIYKAQAETGEIKGHYLNATAGTCEEMIKRAVFARELGVPIIMHDYLTGGFTANTSLAHYCRDNGLLLHIHRAMHAVIDRQKNHGMHFRVLAKALRLSGGDHIHAGTVVGKLEGEREITLGFVDLLRDDFIEKDRSRGIYFTQDWVSLPGVLPVASGGIHVWHMPALTEIFGDDSVLQFGGGTLGHPWGNAPGAVANRVALEACVQARNEGRDLAREGNEIIREASKWSPEFAAACEVWKE</sequence>
<proteinExistence type="inferred from homology"/>
<evidence type="ECO:0000255" key="1">
    <source>
        <dbReference type="HAMAP-Rule" id="MF_01338"/>
    </source>
</evidence>
<gene>
    <name evidence="1" type="primary">rbcL</name>
</gene>
<organism>
    <name type="scientific">Brownea coccinea</name>
    <name type="common">Rose of Venezuela</name>
    <dbReference type="NCBI Taxonomy" id="72381"/>
    <lineage>
        <taxon>Eukaryota</taxon>
        <taxon>Viridiplantae</taxon>
        <taxon>Streptophyta</taxon>
        <taxon>Embryophyta</taxon>
        <taxon>Tracheophyta</taxon>
        <taxon>Spermatophyta</taxon>
        <taxon>Magnoliopsida</taxon>
        <taxon>eudicotyledons</taxon>
        <taxon>Gunneridae</taxon>
        <taxon>Pentapetalae</taxon>
        <taxon>rosids</taxon>
        <taxon>fabids</taxon>
        <taxon>Fabales</taxon>
        <taxon>Fabaceae</taxon>
        <taxon>Detarioideae</taxon>
        <taxon>Amherstieae</taxon>
        <taxon>Brownea</taxon>
    </lineage>
</organism>
<keyword id="KW-0113">Calvin cycle</keyword>
<keyword id="KW-0120">Carbon dioxide fixation</keyword>
<keyword id="KW-0150">Chloroplast</keyword>
<keyword id="KW-1015">Disulfide bond</keyword>
<keyword id="KW-0456">Lyase</keyword>
<keyword id="KW-0460">Magnesium</keyword>
<keyword id="KW-0479">Metal-binding</keyword>
<keyword id="KW-0488">Methylation</keyword>
<keyword id="KW-0503">Monooxygenase</keyword>
<keyword id="KW-0560">Oxidoreductase</keyword>
<keyword id="KW-0601">Photorespiration</keyword>
<keyword id="KW-0602">Photosynthesis</keyword>
<keyword id="KW-0934">Plastid</keyword>
<protein>
    <recommendedName>
        <fullName evidence="1">Ribulose bisphosphate carboxylase large chain</fullName>
        <shortName evidence="1">RuBisCO large subunit</shortName>
        <ecNumber evidence="1">4.1.1.39</ecNumber>
    </recommendedName>
</protein>
<accession>P93988</accession>
<feature type="chain" id="PRO_0000062382" description="Ribulose bisphosphate carboxylase large chain">
    <location>
        <begin position="1" status="less than"/>
        <end position="455" status="greater than"/>
    </location>
</feature>
<feature type="active site" description="Proton acceptor" evidence="1">
    <location>
        <position position="166"/>
    </location>
</feature>
<feature type="active site" description="Proton acceptor" evidence="1">
    <location>
        <position position="285"/>
    </location>
</feature>
<feature type="binding site" description="in homodimeric partner" evidence="1">
    <location>
        <position position="114"/>
    </location>
    <ligand>
        <name>substrate</name>
    </ligand>
</feature>
<feature type="binding site" evidence="1">
    <location>
        <position position="164"/>
    </location>
    <ligand>
        <name>substrate</name>
    </ligand>
</feature>
<feature type="binding site" evidence="1">
    <location>
        <position position="168"/>
    </location>
    <ligand>
        <name>substrate</name>
    </ligand>
</feature>
<feature type="binding site" description="via carbamate group" evidence="1">
    <location>
        <position position="192"/>
    </location>
    <ligand>
        <name>Mg(2+)</name>
        <dbReference type="ChEBI" id="CHEBI:18420"/>
    </ligand>
</feature>
<feature type="binding site" evidence="1">
    <location>
        <position position="194"/>
    </location>
    <ligand>
        <name>Mg(2+)</name>
        <dbReference type="ChEBI" id="CHEBI:18420"/>
    </ligand>
</feature>
<feature type="binding site" evidence="1">
    <location>
        <position position="195"/>
    </location>
    <ligand>
        <name>Mg(2+)</name>
        <dbReference type="ChEBI" id="CHEBI:18420"/>
    </ligand>
</feature>
<feature type="binding site" evidence="1">
    <location>
        <position position="286"/>
    </location>
    <ligand>
        <name>substrate</name>
    </ligand>
</feature>
<feature type="binding site" evidence="1">
    <location>
        <position position="318"/>
    </location>
    <ligand>
        <name>substrate</name>
    </ligand>
</feature>
<feature type="binding site" evidence="1">
    <location>
        <position position="370"/>
    </location>
    <ligand>
        <name>substrate</name>
    </ligand>
</feature>
<feature type="site" description="Transition state stabilizer" evidence="1">
    <location>
        <position position="325"/>
    </location>
</feature>
<feature type="modified residue" description="N6,N6,N6-trimethyllysine" evidence="1">
    <location>
        <position position="5"/>
    </location>
</feature>
<feature type="modified residue" description="N6-carboxylysine" evidence="1">
    <location>
        <position position="192"/>
    </location>
</feature>
<feature type="disulfide bond" description="Interchain; in linked form" evidence="1">
    <location>
        <position position="238"/>
    </location>
</feature>
<feature type="non-terminal residue">
    <location>
        <position position="1"/>
    </location>
</feature>
<feature type="non-terminal residue">
    <location>
        <position position="455"/>
    </location>
</feature>
<reference key="1">
    <citation type="thesis" date="1995" institute="Universitaet Heidelberg" country="Germany">
        <authorList>
            <person name="Kaess E."/>
        </authorList>
    </citation>
    <scope>NUCLEOTIDE SEQUENCE [GENOMIC DNA]</scope>
    <source>
        <tissue>Leaf</tissue>
    </source>
</reference>
<geneLocation type="chloroplast"/>